<accession>C4Z900</accession>
<reference key="1">
    <citation type="journal article" date="2009" name="Proc. Natl. Acad. Sci. U.S.A.">
        <title>Characterizing a model human gut microbiota composed of members of its two dominant bacterial phyla.</title>
        <authorList>
            <person name="Mahowald M.A."/>
            <person name="Rey F.E."/>
            <person name="Seedorf H."/>
            <person name="Turnbaugh P.J."/>
            <person name="Fulton R.S."/>
            <person name="Wollam A."/>
            <person name="Shah N."/>
            <person name="Wang C."/>
            <person name="Magrini V."/>
            <person name="Wilson R.K."/>
            <person name="Cantarel B.L."/>
            <person name="Coutinho P.M."/>
            <person name="Henrissat B."/>
            <person name="Crock L.W."/>
            <person name="Russell A."/>
            <person name="Verberkmoes N.C."/>
            <person name="Hettich R.L."/>
            <person name="Gordon J.I."/>
        </authorList>
    </citation>
    <scope>NUCLEOTIDE SEQUENCE [LARGE SCALE GENOMIC DNA]</scope>
    <source>
        <strain>ATCC 33656 / DSM 3377 / JCM 17463 / KCTC 5835 / LMG 30912 / VPI 0990</strain>
    </source>
</reference>
<sequence length="285" mass="31778">MKFTKMHGCGNDYVYVNLFEEKLDDPARVSIYVSDRHFGIGSDGLITIGPSDKADFRMRIYNADGSEAEMCGNGIRCVAKYVYDHKLTDKTEISVETGAGIKYLTLYVEENKVSQVRVDMGEPILTPGDIPVVKADGSAYSDDYRVIDEPISAGNREWHMTCVSMGNPHAVVFVDDVAGFELEKYGPLFENHKMFPKRTNTEFVEILSRNEAKMRVWERGSAETWACGTGTCATVMACILNKKTDNKVLVHLRGGDLTIEYIPETNHVFMTGPATEVFSGEIDII</sequence>
<comment type="function">
    <text evidence="1">Catalyzes the stereoinversion of LL-2,6-diaminopimelate (L,L-DAP) to meso-diaminopimelate (meso-DAP), a precursor of L-lysine and an essential component of the bacterial peptidoglycan.</text>
</comment>
<comment type="catalytic activity">
    <reaction evidence="1">
        <text>(2S,6S)-2,6-diaminopimelate = meso-2,6-diaminopimelate</text>
        <dbReference type="Rhea" id="RHEA:15393"/>
        <dbReference type="ChEBI" id="CHEBI:57609"/>
        <dbReference type="ChEBI" id="CHEBI:57791"/>
        <dbReference type="EC" id="5.1.1.7"/>
    </reaction>
</comment>
<comment type="pathway">
    <text evidence="1">Amino-acid biosynthesis; L-lysine biosynthesis via DAP pathway; DL-2,6-diaminopimelate from LL-2,6-diaminopimelate: step 1/1.</text>
</comment>
<comment type="subunit">
    <text evidence="1">Homodimer.</text>
</comment>
<comment type="subcellular location">
    <subcellularLocation>
        <location evidence="1">Cytoplasm</location>
    </subcellularLocation>
</comment>
<comment type="similarity">
    <text evidence="1">Belongs to the diaminopimelate epimerase family.</text>
</comment>
<name>DAPF_AGARV</name>
<protein>
    <recommendedName>
        <fullName evidence="1">Diaminopimelate epimerase</fullName>
        <shortName evidence="1">DAP epimerase</shortName>
        <ecNumber evidence="1">5.1.1.7</ecNumber>
    </recommendedName>
    <alternativeName>
        <fullName evidence="1">PLP-independent amino acid racemase</fullName>
    </alternativeName>
</protein>
<keyword id="KW-0028">Amino-acid biosynthesis</keyword>
<keyword id="KW-0963">Cytoplasm</keyword>
<keyword id="KW-0413">Isomerase</keyword>
<keyword id="KW-0457">Lysine biosynthesis</keyword>
<organism>
    <name type="scientific">Agathobacter rectalis (strain ATCC 33656 / DSM 3377 / JCM 17463 / KCTC 5835 / VPI 0990)</name>
    <name type="common">Eubacterium rectale</name>
    <dbReference type="NCBI Taxonomy" id="515619"/>
    <lineage>
        <taxon>Bacteria</taxon>
        <taxon>Bacillati</taxon>
        <taxon>Bacillota</taxon>
        <taxon>Clostridia</taxon>
        <taxon>Lachnospirales</taxon>
        <taxon>Lachnospiraceae</taxon>
        <taxon>Agathobacter</taxon>
    </lineage>
</organism>
<gene>
    <name evidence="1" type="primary">dapF</name>
    <name type="ordered locus">EUBREC_1477</name>
</gene>
<proteinExistence type="inferred from homology"/>
<feature type="chain" id="PRO_1000204060" description="Diaminopimelate epimerase">
    <location>
        <begin position="1"/>
        <end position="285"/>
    </location>
</feature>
<feature type="active site" description="Proton donor" evidence="1">
    <location>
        <position position="71"/>
    </location>
</feature>
<feature type="active site" description="Proton acceptor" evidence="1">
    <location>
        <position position="227"/>
    </location>
</feature>
<feature type="binding site" evidence="1">
    <location>
        <position position="11"/>
    </location>
    <ligand>
        <name>substrate</name>
    </ligand>
</feature>
<feature type="binding site" evidence="1">
    <location>
        <position position="62"/>
    </location>
    <ligand>
        <name>substrate</name>
    </ligand>
</feature>
<feature type="binding site" evidence="1">
    <location>
        <begin position="72"/>
        <end position="73"/>
    </location>
    <ligand>
        <name>substrate</name>
    </ligand>
</feature>
<feature type="binding site" evidence="1">
    <location>
        <position position="167"/>
    </location>
    <ligand>
        <name>substrate</name>
    </ligand>
</feature>
<feature type="binding site" evidence="1">
    <location>
        <position position="200"/>
    </location>
    <ligand>
        <name>substrate</name>
    </ligand>
</feature>
<feature type="binding site" evidence="1">
    <location>
        <begin position="218"/>
        <end position="219"/>
    </location>
    <ligand>
        <name>substrate</name>
    </ligand>
</feature>
<feature type="binding site" evidence="1">
    <location>
        <begin position="228"/>
        <end position="229"/>
    </location>
    <ligand>
        <name>substrate</name>
    </ligand>
</feature>
<feature type="site" description="Could be important to modulate the pK values of the two catalytic cysteine residues" evidence="1">
    <location>
        <position position="169"/>
    </location>
</feature>
<feature type="site" description="Could be important to modulate the pK values of the two catalytic cysteine residues" evidence="1">
    <location>
        <position position="218"/>
    </location>
</feature>
<dbReference type="EC" id="5.1.1.7" evidence="1"/>
<dbReference type="EMBL" id="CP001107">
    <property type="protein sequence ID" value="ACR75231.1"/>
    <property type="molecule type" value="Genomic_DNA"/>
</dbReference>
<dbReference type="RefSeq" id="WP_012742330.1">
    <property type="nucleotide sequence ID" value="NC_012781.1"/>
</dbReference>
<dbReference type="SMR" id="C4Z900"/>
<dbReference type="STRING" id="515619.EUBREC_1477"/>
<dbReference type="PaxDb" id="515619-EUBREC_1477"/>
<dbReference type="GeneID" id="86988297"/>
<dbReference type="KEGG" id="ere:EUBREC_1477"/>
<dbReference type="HOGENOM" id="CLU_053306_3_0_9"/>
<dbReference type="UniPathway" id="UPA00034">
    <property type="reaction ID" value="UER00025"/>
</dbReference>
<dbReference type="Proteomes" id="UP000001477">
    <property type="component" value="Chromosome"/>
</dbReference>
<dbReference type="GO" id="GO:0005829">
    <property type="term" value="C:cytosol"/>
    <property type="evidence" value="ECO:0007669"/>
    <property type="project" value="TreeGrafter"/>
</dbReference>
<dbReference type="GO" id="GO:0008837">
    <property type="term" value="F:diaminopimelate epimerase activity"/>
    <property type="evidence" value="ECO:0007669"/>
    <property type="project" value="UniProtKB-UniRule"/>
</dbReference>
<dbReference type="GO" id="GO:0009089">
    <property type="term" value="P:lysine biosynthetic process via diaminopimelate"/>
    <property type="evidence" value="ECO:0007669"/>
    <property type="project" value="UniProtKB-UniRule"/>
</dbReference>
<dbReference type="FunFam" id="3.10.310.10:FF:000001">
    <property type="entry name" value="Diaminopimelate epimerase"/>
    <property type="match status" value="1"/>
</dbReference>
<dbReference type="Gene3D" id="3.10.310.10">
    <property type="entry name" value="Diaminopimelate Epimerase, Chain A, domain 1"/>
    <property type="match status" value="2"/>
</dbReference>
<dbReference type="HAMAP" id="MF_00197">
    <property type="entry name" value="DAP_epimerase"/>
    <property type="match status" value="1"/>
</dbReference>
<dbReference type="InterPro" id="IPR018510">
    <property type="entry name" value="DAP_epimerase_AS"/>
</dbReference>
<dbReference type="InterPro" id="IPR001653">
    <property type="entry name" value="DAP_epimerase_DapF"/>
</dbReference>
<dbReference type="NCBIfam" id="TIGR00652">
    <property type="entry name" value="DapF"/>
    <property type="match status" value="1"/>
</dbReference>
<dbReference type="PANTHER" id="PTHR31689:SF0">
    <property type="entry name" value="DIAMINOPIMELATE EPIMERASE"/>
    <property type="match status" value="1"/>
</dbReference>
<dbReference type="PANTHER" id="PTHR31689">
    <property type="entry name" value="DIAMINOPIMELATE EPIMERASE, CHLOROPLASTIC"/>
    <property type="match status" value="1"/>
</dbReference>
<dbReference type="Pfam" id="PF01678">
    <property type="entry name" value="DAP_epimerase"/>
    <property type="match status" value="2"/>
</dbReference>
<dbReference type="SUPFAM" id="SSF54506">
    <property type="entry name" value="Diaminopimelate epimerase-like"/>
    <property type="match status" value="1"/>
</dbReference>
<dbReference type="PROSITE" id="PS01326">
    <property type="entry name" value="DAP_EPIMERASE"/>
    <property type="match status" value="1"/>
</dbReference>
<evidence type="ECO:0000255" key="1">
    <source>
        <dbReference type="HAMAP-Rule" id="MF_00197"/>
    </source>
</evidence>